<reference key="1">
    <citation type="journal article" date="2002" name="Proc. Natl. Acad. Sci. U.S.A.">
        <title>The complete genome of hyperthermophile Methanopyrus kandleri AV19 and monophyly of archaeal methanogens.</title>
        <authorList>
            <person name="Slesarev A.I."/>
            <person name="Mezhevaya K.V."/>
            <person name="Makarova K.S."/>
            <person name="Polushin N.N."/>
            <person name="Shcherbinina O.V."/>
            <person name="Shakhova V.V."/>
            <person name="Belova G.I."/>
            <person name="Aravind L."/>
            <person name="Natale D.A."/>
            <person name="Rogozin I.B."/>
            <person name="Tatusov R.L."/>
            <person name="Wolf Y.I."/>
            <person name="Stetter K.O."/>
            <person name="Malykh A.G."/>
            <person name="Koonin E.V."/>
            <person name="Kozyavkin S.A."/>
        </authorList>
    </citation>
    <scope>NUCLEOTIDE SEQUENCE [LARGE SCALE GENOMIC DNA]</scope>
    <source>
        <strain>AV19 / DSM 6324 / JCM 9639 / NBRC 100938</strain>
    </source>
</reference>
<name>NOP10_METKA</name>
<gene>
    <name type="primary">nop10</name>
    <name type="ordered locus">MK0420</name>
</gene>
<dbReference type="EMBL" id="AE009439">
    <property type="protein sequence ID" value="AAM01635.1"/>
    <property type="molecule type" value="Genomic_DNA"/>
</dbReference>
<dbReference type="RefSeq" id="WP_011018790.1">
    <property type="nucleotide sequence ID" value="NC_003551.1"/>
</dbReference>
<dbReference type="SMR" id="Q8TY85"/>
<dbReference type="FunCoup" id="Q8TY85">
    <property type="interactions" value="8"/>
</dbReference>
<dbReference type="STRING" id="190192.MK0420"/>
<dbReference type="PaxDb" id="190192-MK0420"/>
<dbReference type="EnsemblBacteria" id="AAM01635">
    <property type="protein sequence ID" value="AAM01635"/>
    <property type="gene ID" value="MK0420"/>
</dbReference>
<dbReference type="GeneID" id="1477723"/>
<dbReference type="KEGG" id="mka:MK0420"/>
<dbReference type="PATRIC" id="fig|190192.8.peg.449"/>
<dbReference type="HOGENOM" id="CLU_196480_1_0_2"/>
<dbReference type="InParanoid" id="Q8TY85"/>
<dbReference type="OrthoDB" id="7259at2157"/>
<dbReference type="Proteomes" id="UP000001826">
    <property type="component" value="Chromosome"/>
</dbReference>
<dbReference type="GO" id="GO:1990904">
    <property type="term" value="C:ribonucleoprotein complex"/>
    <property type="evidence" value="ECO:0007669"/>
    <property type="project" value="UniProtKB-KW"/>
</dbReference>
<dbReference type="GO" id="GO:0030515">
    <property type="term" value="F:snoRNA binding"/>
    <property type="evidence" value="ECO:0007669"/>
    <property type="project" value="InterPro"/>
</dbReference>
<dbReference type="GO" id="GO:0001522">
    <property type="term" value="P:pseudouridine synthesis"/>
    <property type="evidence" value="ECO:0007669"/>
    <property type="project" value="InterPro"/>
</dbReference>
<dbReference type="GO" id="GO:0006364">
    <property type="term" value="P:rRNA processing"/>
    <property type="evidence" value="ECO:0007669"/>
    <property type="project" value="UniProtKB-UniRule"/>
</dbReference>
<dbReference type="Gene3D" id="2.20.28.40">
    <property type="entry name" value="H/ACA ribonucleoprotein complex, subunit Nop10"/>
    <property type="match status" value="1"/>
</dbReference>
<dbReference type="HAMAP" id="MF_00803">
    <property type="entry name" value="Nop10"/>
    <property type="match status" value="1"/>
</dbReference>
<dbReference type="InterPro" id="IPR007264">
    <property type="entry name" value="H/ACA_rnp_Nop10"/>
</dbReference>
<dbReference type="InterPro" id="IPR036756">
    <property type="entry name" value="H/ACA_rnp_Nop10_sf"/>
</dbReference>
<dbReference type="InterPro" id="IPR023532">
    <property type="entry name" value="Nop10_arc-typ"/>
</dbReference>
<dbReference type="NCBIfam" id="NF009623">
    <property type="entry name" value="PRK13130.1"/>
    <property type="match status" value="1"/>
</dbReference>
<dbReference type="PANTHER" id="PTHR13305:SF0">
    <property type="entry name" value="H_ACA RIBONUCLEOPROTEIN COMPLEX SUBUNIT 3"/>
    <property type="match status" value="1"/>
</dbReference>
<dbReference type="PANTHER" id="PTHR13305">
    <property type="entry name" value="RIBOSOME BIOGENESIS PROTEIN NOP10"/>
    <property type="match status" value="1"/>
</dbReference>
<dbReference type="Pfam" id="PF04135">
    <property type="entry name" value="Nop10p"/>
    <property type="match status" value="1"/>
</dbReference>
<dbReference type="SUPFAM" id="SSF144210">
    <property type="entry name" value="Nop10-like SnoRNP"/>
    <property type="match status" value="1"/>
</dbReference>
<accession>Q8TY85</accession>
<sequence length="66" mass="7755">MPKRLRRCKECGEYTLQRDKCPHCGGDLEVPHPHRFSPEDPYGKYRRKLKKRVWAEKFGPPSGEGD</sequence>
<proteinExistence type="inferred from homology"/>
<feature type="chain" id="PRO_0000149019" description="Ribosome biogenesis protein Nop10">
    <location>
        <begin position="1"/>
        <end position="66"/>
    </location>
</feature>
<organism>
    <name type="scientific">Methanopyrus kandleri (strain AV19 / DSM 6324 / JCM 9639 / NBRC 100938)</name>
    <dbReference type="NCBI Taxonomy" id="190192"/>
    <lineage>
        <taxon>Archaea</taxon>
        <taxon>Methanobacteriati</taxon>
        <taxon>Methanobacteriota</taxon>
        <taxon>Methanomada group</taxon>
        <taxon>Methanopyri</taxon>
        <taxon>Methanopyrales</taxon>
        <taxon>Methanopyraceae</taxon>
        <taxon>Methanopyrus</taxon>
    </lineage>
</organism>
<evidence type="ECO:0000250" key="1"/>
<evidence type="ECO:0000305" key="2"/>
<keyword id="KW-1185">Reference proteome</keyword>
<keyword id="KW-0687">Ribonucleoprotein</keyword>
<keyword id="KW-0690">Ribosome biogenesis</keyword>
<keyword id="KW-0698">rRNA processing</keyword>
<protein>
    <recommendedName>
        <fullName>Ribosome biogenesis protein Nop10</fullName>
    </recommendedName>
</protein>
<comment type="function">
    <text evidence="1">Involved in ribosome biogenesis; more specifically in 18S rRNA pseudouridylation and in cleavage of pre-rRNA.</text>
</comment>
<comment type="similarity">
    <text evidence="2">Belongs to the NOP10 family.</text>
</comment>